<comment type="function">
    <text evidence="1">Catalyzes the catabolism of the allantoin degradation intermediate (S)-ureidoglycolate, generating urea and glyoxylate. Involved in the anaerobic utilization of allantoin as sole nitrogen source. Reinforces the induction of genes involved in the degradation of allantoin and glyoxylate by producing glyoxylate.</text>
</comment>
<comment type="catalytic activity">
    <reaction evidence="1">
        <text>(S)-ureidoglycolate = urea + glyoxylate</text>
        <dbReference type="Rhea" id="RHEA:11304"/>
        <dbReference type="ChEBI" id="CHEBI:16199"/>
        <dbReference type="ChEBI" id="CHEBI:36655"/>
        <dbReference type="ChEBI" id="CHEBI:57296"/>
        <dbReference type="EC" id="4.3.2.3"/>
    </reaction>
</comment>
<comment type="cofactor">
    <cofactor evidence="1">
        <name>Ni(2+)</name>
        <dbReference type="ChEBI" id="CHEBI:49786"/>
    </cofactor>
</comment>
<comment type="pathway">
    <text evidence="1">Nitrogen metabolism; (S)-allantoin degradation.</text>
</comment>
<comment type="subunit">
    <text evidence="1">Homodimer.</text>
</comment>
<comment type="similarity">
    <text evidence="1">Belongs to the ureidoglycolate lyase family.</text>
</comment>
<reference key="1">
    <citation type="journal article" date="2009" name="PLoS Genet.">
        <title>Organised genome dynamics in the Escherichia coli species results in highly diverse adaptive paths.</title>
        <authorList>
            <person name="Touchon M."/>
            <person name="Hoede C."/>
            <person name="Tenaillon O."/>
            <person name="Barbe V."/>
            <person name="Baeriswyl S."/>
            <person name="Bidet P."/>
            <person name="Bingen E."/>
            <person name="Bonacorsi S."/>
            <person name="Bouchier C."/>
            <person name="Bouvet O."/>
            <person name="Calteau A."/>
            <person name="Chiapello H."/>
            <person name="Clermont O."/>
            <person name="Cruveiller S."/>
            <person name="Danchin A."/>
            <person name="Diard M."/>
            <person name="Dossat C."/>
            <person name="Karoui M.E."/>
            <person name="Frapy E."/>
            <person name="Garry L."/>
            <person name="Ghigo J.M."/>
            <person name="Gilles A.M."/>
            <person name="Johnson J."/>
            <person name="Le Bouguenec C."/>
            <person name="Lescat M."/>
            <person name="Mangenot S."/>
            <person name="Martinez-Jehanne V."/>
            <person name="Matic I."/>
            <person name="Nassif X."/>
            <person name="Oztas S."/>
            <person name="Petit M.A."/>
            <person name="Pichon C."/>
            <person name="Rouy Z."/>
            <person name="Ruf C.S."/>
            <person name="Schneider D."/>
            <person name="Tourret J."/>
            <person name="Vacherie B."/>
            <person name="Vallenet D."/>
            <person name="Medigue C."/>
            <person name="Rocha E.P.C."/>
            <person name="Denamur E."/>
        </authorList>
    </citation>
    <scope>NUCLEOTIDE SEQUENCE [LARGE SCALE GENOMIC DNA]</scope>
    <source>
        <strain>ED1a</strain>
    </source>
</reference>
<evidence type="ECO:0000255" key="1">
    <source>
        <dbReference type="HAMAP-Rule" id="MF_00616"/>
    </source>
</evidence>
<dbReference type="EC" id="4.3.2.3" evidence="1"/>
<dbReference type="EMBL" id="CU928162">
    <property type="protein sequence ID" value="CAR06735.1"/>
    <property type="molecule type" value="Genomic_DNA"/>
</dbReference>
<dbReference type="RefSeq" id="WP_000776372.1">
    <property type="nucleotide sequence ID" value="NC_011745.1"/>
</dbReference>
<dbReference type="SMR" id="B7MQL7"/>
<dbReference type="KEGG" id="ecq:ECED1_0526"/>
<dbReference type="HOGENOM" id="CLU_070848_1_1_6"/>
<dbReference type="UniPathway" id="UPA00395"/>
<dbReference type="Proteomes" id="UP000000748">
    <property type="component" value="Chromosome"/>
</dbReference>
<dbReference type="GO" id="GO:0004848">
    <property type="term" value="F:ureidoglycolate hydrolase activity"/>
    <property type="evidence" value="ECO:0007669"/>
    <property type="project" value="InterPro"/>
</dbReference>
<dbReference type="GO" id="GO:0050385">
    <property type="term" value="F:ureidoglycolate lyase activity"/>
    <property type="evidence" value="ECO:0007669"/>
    <property type="project" value="UniProtKB-UniRule"/>
</dbReference>
<dbReference type="GO" id="GO:0000256">
    <property type="term" value="P:allantoin catabolic process"/>
    <property type="evidence" value="ECO:0007669"/>
    <property type="project" value="UniProtKB-UniRule"/>
</dbReference>
<dbReference type="GO" id="GO:0006145">
    <property type="term" value="P:purine nucleobase catabolic process"/>
    <property type="evidence" value="ECO:0007669"/>
    <property type="project" value="UniProtKB-UniRule"/>
</dbReference>
<dbReference type="CDD" id="cd20298">
    <property type="entry name" value="cupin_UAH"/>
    <property type="match status" value="1"/>
</dbReference>
<dbReference type="FunFam" id="2.60.120.480:FF:000001">
    <property type="entry name" value="Ureidoglycolate lyase"/>
    <property type="match status" value="1"/>
</dbReference>
<dbReference type="Gene3D" id="2.60.120.480">
    <property type="entry name" value="Ureidoglycolate hydrolase"/>
    <property type="match status" value="1"/>
</dbReference>
<dbReference type="HAMAP" id="MF_00616">
    <property type="entry name" value="Ureidogly_lyase"/>
    <property type="match status" value="1"/>
</dbReference>
<dbReference type="InterPro" id="IPR011051">
    <property type="entry name" value="RmlC_Cupin_sf"/>
</dbReference>
<dbReference type="InterPro" id="IPR047233">
    <property type="entry name" value="UAH_cupin"/>
</dbReference>
<dbReference type="InterPro" id="IPR007247">
    <property type="entry name" value="Ureidogly_lyase"/>
</dbReference>
<dbReference type="InterPro" id="IPR023525">
    <property type="entry name" value="Ureidogly_lyase_bac"/>
</dbReference>
<dbReference type="InterPro" id="IPR024060">
    <property type="entry name" value="Ureidoglycolate_lyase_dom_sf"/>
</dbReference>
<dbReference type="NCBIfam" id="NF002948">
    <property type="entry name" value="PRK03606.1-1"/>
    <property type="match status" value="1"/>
</dbReference>
<dbReference type="NCBIfam" id="NF009932">
    <property type="entry name" value="PRK13395.1"/>
    <property type="match status" value="1"/>
</dbReference>
<dbReference type="PANTHER" id="PTHR21221">
    <property type="entry name" value="UREIDOGLYCOLATE HYDROLASE"/>
    <property type="match status" value="1"/>
</dbReference>
<dbReference type="PANTHER" id="PTHR21221:SF1">
    <property type="entry name" value="UREIDOGLYCOLATE LYASE"/>
    <property type="match status" value="1"/>
</dbReference>
<dbReference type="Pfam" id="PF04115">
    <property type="entry name" value="Ureidogly_lyase"/>
    <property type="match status" value="1"/>
</dbReference>
<dbReference type="PIRSF" id="PIRSF017306">
    <property type="entry name" value="Ureidogly_hydro"/>
    <property type="match status" value="1"/>
</dbReference>
<dbReference type="SUPFAM" id="SSF51182">
    <property type="entry name" value="RmlC-like cupins"/>
    <property type="match status" value="1"/>
</dbReference>
<accession>B7MQL7</accession>
<proteinExistence type="inferred from homology"/>
<sequence>MKLQVLPLSQEAFSAYGDVIETQKRDFFHINNGLVERYHDLALVEILEQDRTLISINRAQPANLPLTIHELERHPLGTQAFIPMKGEVFVVVVALGDDKPDLSTLRAFITNGEQGVNYHRNVWHHPLFAWQRVTDFLTIDRGGSDNCDVESIPEQELCFA</sequence>
<organism>
    <name type="scientific">Escherichia coli O81 (strain ED1a)</name>
    <dbReference type="NCBI Taxonomy" id="585397"/>
    <lineage>
        <taxon>Bacteria</taxon>
        <taxon>Pseudomonadati</taxon>
        <taxon>Pseudomonadota</taxon>
        <taxon>Gammaproteobacteria</taxon>
        <taxon>Enterobacterales</taxon>
        <taxon>Enterobacteriaceae</taxon>
        <taxon>Escherichia</taxon>
    </lineage>
</organism>
<protein>
    <recommendedName>
        <fullName evidence="1">Ureidoglycolate lyase</fullName>
        <ecNumber evidence="1">4.3.2.3</ecNumber>
    </recommendedName>
    <alternativeName>
        <fullName evidence="1">Ureidoglycolatase</fullName>
    </alternativeName>
</protein>
<gene>
    <name evidence="1" type="primary">allA</name>
    <name type="ordered locus">ECED1_0526</name>
</gene>
<keyword id="KW-0456">Lyase</keyword>
<keyword id="KW-0659">Purine metabolism</keyword>
<name>ALLA_ECO81</name>
<feature type="chain" id="PRO_1000147187" description="Ureidoglycolate lyase">
    <location>
        <begin position="1"/>
        <end position="160"/>
    </location>
</feature>